<gene>
    <name type="primary">botG</name>
</gene>
<organism>
    <name type="scientific">Clostridium botulinum</name>
    <dbReference type="NCBI Taxonomy" id="1491"/>
    <lineage>
        <taxon>Bacteria</taxon>
        <taxon>Bacillati</taxon>
        <taxon>Bacillota</taxon>
        <taxon>Clostridia</taxon>
        <taxon>Eubacteriales</taxon>
        <taxon>Clostridiaceae</taxon>
        <taxon>Clostridium</taxon>
    </lineage>
</organism>
<evidence type="ECO:0000250" key="1">
    <source>
        <dbReference type="UniProtKB" id="P0DPI0"/>
    </source>
</evidence>
<evidence type="ECO:0000255" key="2">
    <source>
        <dbReference type="PROSITE-ProRule" id="PRU10095"/>
    </source>
</evidence>
<evidence type="ECO:0000269" key="3">
    <source>
    </source>
</evidence>
<evidence type="ECO:0000269" key="4">
    <source>
    </source>
</evidence>
<evidence type="ECO:0000269" key="5">
    <source>
    </source>
</evidence>
<evidence type="ECO:0000269" key="6">
    <source>
    </source>
</evidence>
<evidence type="ECO:0000269" key="7">
    <source>
    </source>
</evidence>
<evidence type="ECO:0000269" key="8">
    <source>
    </source>
</evidence>
<evidence type="ECO:0000269" key="9">
    <source>
    </source>
</evidence>
<evidence type="ECO:0000269" key="10">
    <source>
    </source>
</evidence>
<evidence type="ECO:0000269" key="11">
    <source>
    </source>
</evidence>
<evidence type="ECO:0000303" key="12">
    <source>
    </source>
</evidence>
<evidence type="ECO:0000305" key="13"/>
<evidence type="ECO:0000305" key="14">
    <source>
    </source>
</evidence>
<evidence type="ECO:0000305" key="15">
    <source>
    </source>
</evidence>
<evidence type="ECO:0000305" key="16">
    <source>
    </source>
</evidence>
<evidence type="ECO:0000305" key="17">
    <source>
    </source>
</evidence>
<evidence type="ECO:0000305" key="18">
    <source>
    </source>
</evidence>
<evidence type="ECO:0000305" key="19">
    <source ref="4"/>
</evidence>
<evidence type="ECO:0007744" key="20">
    <source>
        <dbReference type="PDB" id="1ZB7"/>
    </source>
</evidence>
<evidence type="ECO:0007744" key="21">
    <source>
        <dbReference type="PDB" id="2VXR"/>
    </source>
</evidence>
<evidence type="ECO:0007744" key="22">
    <source>
        <dbReference type="PDB" id="3MPP"/>
    </source>
</evidence>
<evidence type="ECO:0007829" key="23">
    <source>
        <dbReference type="PDB" id="1ZB7"/>
    </source>
</evidence>
<evidence type="ECO:0007829" key="24">
    <source>
        <dbReference type="PDB" id="2VXR"/>
    </source>
</evidence>
<evidence type="ECO:0007829" key="25">
    <source>
        <dbReference type="PDB" id="3MPP"/>
    </source>
</evidence>
<sequence>MPVNIKXFNYNDPINNDDIIMMEPFNDPGPGTYYKAFRIIDRIWIVPERFTYGFQPDQFNASTGVFSKDVYEYYDPTYLKTDAEKDKFLKTMIKLFNRINSKPSGQRLLDMIVDAIPYLGNASTPPDKFAANVANVSINKKIIQPGAEDQIKGLMTNLIIFGPGPVLSDNFTDSMIMNGHSPISEGFGARMMIRFCPSCLNVFNNVQENKDTSIFSRRAYFADPALTLMHELIHVLHGLYGIKISNLPITPNTKEFFMQHSDPVQAEELYTFGGHDPSVISPSTDMNIYNKALQNFQDIANRLNIVSSAQGSGIDISLYKQIYKNKYDFVEDPNGKYSVDKDKFDKLYKALMFGFTETNLAGEYGIKTRYSYFSEYLPPIKTEKLLDNTIYTQNEGFNIASKNLKTEFNGQNKAVNKEAYEEISLEHLVIYRIAMCKPVMYKNTGKSEQCIIVNNEDLFFIANKDSFSKDLAKAETIAYNTQNNTIENNFSIDQLILDNDLSSGIDLPNENTEPFTNFDDIDIPVYIKQSALKKIFVDGDSLFEYLHAQTFPSNIENLQLTNSLNDALRNNNKVYTFFSTNLVEKANTVVGASLFVNWVKGVIDDFTSESTQKSTIDKVSDVSIIIPYIGPALNVGNETAKENFKNAFEIGGAAILMEFIPELIVPIVGFFTLESYVGNKGHIIMTISNALKKRDQKWTDMYGLIVSQWLSTVNTQFYTIKERMYNALNNQSQAIEKIIEDQYNRYSEEDKMNINIDFNDIDFKLNQSINLAINNIDDFINQCSISYLMNRMIPLAVKKLKDFDDNLKRDLLEYIDTNELYLLDEVNILKSKVNRHLKDSIPFDLSLYTKDTILIQVFNNYISNISSNAILSLSYRGGRLIDSSGYGATMNVGSDVIFNDIGNGQFKLNNSENSNITAHQSKFVVYDSMFDNFSINFWVRTPKYNNNDIQTYLQNEYTIISCIKNDSGWKVSIKGNRIIWTLIDVNAKSKSIFFEYSIKDNISDYINKWFSITITNDRLGNANIYINGSLKKSEKILNLDRINSSNDIDFKLINCTDTTKFVWIKDFNIFGRELNATEVSSLYWIQSSTNTLKDFWGNPLRYDTQYYLFNQGMQNIYIKYFSKASMGETAPRTNFNNAAINYQNLYLGLRFIIKKASNSRNINNDNIVREGDYIYLNIDNISDESYRVYVLVNSKEIQTQLFLAPINDDPTFYDVLQIKKYYEKTTYNCQILCEKDTKTFGLFGIGKFVKDYGYVWDTYDNYFCISQWYLRRISENINKLRLGCNWQFIPVDEGWTE</sequence>
<protein>
    <recommendedName>
        <fullName>Botulinum neurotoxin type G</fullName>
        <shortName evidence="12">BoNT/G</shortName>
    </recommendedName>
    <alternativeName>
        <fullName>Bontoxilysin-G</fullName>
    </alternativeName>
    <component>
        <recommendedName>
            <fullName>Botulinum neurotoxin G light chain</fullName>
            <shortName>LC</shortName>
            <ecNumber evidence="11">3.4.24.69</ecNumber>
        </recommendedName>
    </component>
    <component>
        <recommendedName>
            <fullName>Botulinum neurotoxin G heavy chain</fullName>
            <shortName>HC</shortName>
        </recommendedName>
    </component>
</protein>
<accession>Q60393</accession>
<dbReference type="EC" id="3.4.24.69" evidence="11"/>
<dbReference type="EMBL" id="X74162">
    <property type="protein sequence ID" value="CAA52275.1"/>
    <property type="molecule type" value="Genomic_DNA"/>
</dbReference>
<dbReference type="PIR" id="S39791">
    <property type="entry name" value="S39791"/>
</dbReference>
<dbReference type="PDB" id="1ZB7">
    <property type="method" value="X-ray"/>
    <property type="resolution" value="2.35 A"/>
    <property type="chains" value="A=1-443"/>
</dbReference>
<dbReference type="PDB" id="2VXR">
    <property type="method" value="X-ray"/>
    <property type="resolution" value="1.90 A"/>
    <property type="chains" value="A=863-1297"/>
</dbReference>
<dbReference type="PDB" id="3MPP">
    <property type="method" value="X-ray"/>
    <property type="resolution" value="1.98 A"/>
    <property type="chains" value="G=867-1297"/>
</dbReference>
<dbReference type="PDBsum" id="1ZB7"/>
<dbReference type="PDBsum" id="2VXR"/>
<dbReference type="PDBsum" id="3MPP"/>
<dbReference type="SMR" id="Q60393"/>
<dbReference type="DIP" id="DIP-60790N"/>
<dbReference type="IntAct" id="Q60393">
    <property type="interactions" value="3"/>
</dbReference>
<dbReference type="MINT" id="Q60393"/>
<dbReference type="DrugBank" id="DB13899">
    <property type="generic name" value="Equine Botulinum Neurotoxin G Immune FAB2"/>
</dbReference>
<dbReference type="MEROPS" id="M27.002"/>
<dbReference type="UniLectin" id="Q60393"/>
<dbReference type="ABCD" id="Q60393">
    <property type="antibodies" value="27 sequenced antibodies"/>
</dbReference>
<dbReference type="BRENDA" id="3.4.24.69">
    <property type="organism ID" value="1462"/>
</dbReference>
<dbReference type="Reactome" id="R-HSA-5250989">
    <property type="pathway name" value="Toxicity of botulinum toxin type G (botG)"/>
</dbReference>
<dbReference type="EvolutionaryTrace" id="Q60393"/>
<dbReference type="GO" id="GO:0005576">
    <property type="term" value="C:extracellular region"/>
    <property type="evidence" value="ECO:0007669"/>
    <property type="project" value="UniProtKB-SubCell"/>
</dbReference>
<dbReference type="GO" id="GO:0044161">
    <property type="term" value="C:host cell cytoplasmic vesicle"/>
    <property type="evidence" value="ECO:0007669"/>
    <property type="project" value="UniProtKB-SubCell"/>
</dbReference>
<dbReference type="GO" id="GO:0044164">
    <property type="term" value="C:host cell cytosol"/>
    <property type="evidence" value="ECO:0007669"/>
    <property type="project" value="UniProtKB-SubCell"/>
</dbReference>
<dbReference type="GO" id="GO:0020002">
    <property type="term" value="C:host cell plasma membrane"/>
    <property type="evidence" value="ECO:0007669"/>
    <property type="project" value="UniProtKB-KW"/>
</dbReference>
<dbReference type="GO" id="GO:0044231">
    <property type="term" value="C:host cell presynaptic membrane"/>
    <property type="evidence" value="ECO:0007669"/>
    <property type="project" value="UniProtKB-SubCell"/>
</dbReference>
<dbReference type="GO" id="GO:0016020">
    <property type="term" value="C:membrane"/>
    <property type="evidence" value="ECO:0007669"/>
    <property type="project" value="UniProtKB-KW"/>
</dbReference>
<dbReference type="GO" id="GO:0008289">
    <property type="term" value="F:lipid binding"/>
    <property type="evidence" value="ECO:0007669"/>
    <property type="project" value="UniProtKB-KW"/>
</dbReference>
<dbReference type="GO" id="GO:0004222">
    <property type="term" value="F:metalloendopeptidase activity"/>
    <property type="evidence" value="ECO:0007669"/>
    <property type="project" value="UniProtKB-EC"/>
</dbReference>
<dbReference type="GO" id="GO:0008320">
    <property type="term" value="F:protein transmembrane transporter activity"/>
    <property type="evidence" value="ECO:0000304"/>
    <property type="project" value="Reactome"/>
</dbReference>
<dbReference type="GO" id="GO:0090729">
    <property type="term" value="F:toxin activity"/>
    <property type="evidence" value="ECO:0007669"/>
    <property type="project" value="UniProtKB-KW"/>
</dbReference>
<dbReference type="GO" id="GO:0008270">
    <property type="term" value="F:zinc ion binding"/>
    <property type="evidence" value="ECO:0007669"/>
    <property type="project" value="InterPro"/>
</dbReference>
<dbReference type="GO" id="GO:0006508">
    <property type="term" value="P:proteolysis"/>
    <property type="evidence" value="ECO:0007669"/>
    <property type="project" value="UniProtKB-KW"/>
</dbReference>
<dbReference type="CDD" id="cd23394">
    <property type="entry name" value="Toxin_R_bind_C_BoNTG"/>
    <property type="match status" value="1"/>
</dbReference>
<dbReference type="FunFam" id="3.90.1240.10:FF:000001">
    <property type="entry name" value="Botulinum neurotoxin type B"/>
    <property type="match status" value="1"/>
</dbReference>
<dbReference type="Gene3D" id="2.60.120.200">
    <property type="match status" value="1"/>
</dbReference>
<dbReference type="Gene3D" id="2.80.10.50">
    <property type="match status" value="1"/>
</dbReference>
<dbReference type="Gene3D" id="1.20.1120.10">
    <property type="entry name" value="Clostridium botulinum neurotoxin b, 'coiled-coil' domain"/>
    <property type="match status" value="1"/>
</dbReference>
<dbReference type="Gene3D" id="3.90.1240.10">
    <property type="entry name" value="Metalloproteases ('zincins'), catalytic domain like"/>
    <property type="match status" value="1"/>
</dbReference>
<dbReference type="InterPro" id="IPR000395">
    <property type="entry name" value="Bot/tetX_LC"/>
</dbReference>
<dbReference type="InterPro" id="IPR036248">
    <property type="entry name" value="Clostridium_toxin_transloc"/>
</dbReference>
<dbReference type="InterPro" id="IPR013320">
    <property type="entry name" value="ConA-like_dom_sf"/>
</dbReference>
<dbReference type="InterPro" id="IPR011065">
    <property type="entry name" value="Kunitz_inhibitor_STI-like_sf"/>
</dbReference>
<dbReference type="InterPro" id="IPR013104">
    <property type="entry name" value="Toxin_rcpt-bd_C"/>
</dbReference>
<dbReference type="InterPro" id="IPR012928">
    <property type="entry name" value="Toxin_rcpt-bd_N"/>
</dbReference>
<dbReference type="InterPro" id="IPR012500">
    <property type="entry name" value="Toxin_trans"/>
</dbReference>
<dbReference type="Pfam" id="PF01742">
    <property type="entry name" value="Peptidase_M27"/>
    <property type="match status" value="1"/>
</dbReference>
<dbReference type="Pfam" id="PF07951">
    <property type="entry name" value="Toxin_R_bind_C"/>
    <property type="match status" value="1"/>
</dbReference>
<dbReference type="Pfam" id="PF07953">
    <property type="entry name" value="Toxin_R_bind_N"/>
    <property type="match status" value="1"/>
</dbReference>
<dbReference type="Pfam" id="PF07952">
    <property type="entry name" value="Toxin_trans"/>
    <property type="match status" value="1"/>
</dbReference>
<dbReference type="PRINTS" id="PR00760">
    <property type="entry name" value="BONTOXILYSIN"/>
</dbReference>
<dbReference type="SUPFAM" id="SSF58091">
    <property type="entry name" value="Clostridium neurotoxins, 'coiled-coil' domain"/>
    <property type="match status" value="1"/>
</dbReference>
<dbReference type="SUPFAM" id="SSF49899">
    <property type="entry name" value="Concanavalin A-like lectins/glucanases"/>
    <property type="match status" value="1"/>
</dbReference>
<dbReference type="SUPFAM" id="SSF55486">
    <property type="entry name" value="Metalloproteases ('zincins'), catalytic domain"/>
    <property type="match status" value="1"/>
</dbReference>
<dbReference type="SUPFAM" id="SSF50386">
    <property type="entry name" value="STI-like"/>
    <property type="match status" value="1"/>
</dbReference>
<dbReference type="PROSITE" id="PS00142">
    <property type="entry name" value="ZINC_PROTEASE"/>
    <property type="match status" value="1"/>
</dbReference>
<keyword id="KW-0002">3D-structure</keyword>
<keyword id="KW-1015">Disulfide bond</keyword>
<keyword id="KW-1032">Host cell membrane</keyword>
<keyword id="KW-1035">Host cytoplasm</keyword>
<keyword id="KW-1036">Host cytoplasmic vesicle</keyword>
<keyword id="KW-1043">Host membrane</keyword>
<keyword id="KW-1051">Host synapse</keyword>
<keyword id="KW-0378">Hydrolase</keyword>
<keyword id="KW-0446">Lipid-binding</keyword>
<keyword id="KW-0472">Membrane</keyword>
<keyword id="KW-0479">Metal-binding</keyword>
<keyword id="KW-0482">Metalloprotease</keyword>
<keyword id="KW-0528">Neurotoxin</keyword>
<keyword id="KW-0645">Protease</keyword>
<keyword id="KW-0964">Secreted</keyword>
<keyword id="KW-0800">Toxin</keyword>
<keyword id="KW-0843">Virulence</keyword>
<keyword id="KW-0862">Zinc</keyword>
<comment type="function">
    <molecule>Botulinum neurotoxin type G</molecule>
    <text evidence="1 3">Botulinum toxin causes flaccid paralysis by inhibiting neurotransmitter (acetylcholine) release from the presynaptic membranes of nerve terminals of the eukaryotic host skeletal and autonomic nervous system, with frequent heart or respiratory failure (PubMed:15123599). Precursor of botulinum neurotoxin G which has 2 coreceptors; complex polysialylated gangliosides found on neural tissue and specific membrane-anchored proteins found in synaptic vesicles (PubMed:15123599). Receptor proteins are exposed on host presynaptic cell membrane during neurotransmitter release, when the toxin heavy chain (HC) binds to them. Upon synaptic vesicle recycling the toxin is taken up via the endocytic pathway. When the pH of the toxin-containing endosome drops a structural rearrangement occurs so that the N-terminus of the HC forms pores that allows the light chain (LC) to translocate into the cytosol. Once in the cytosol the disulfide bond linking the 2 subunits is reduced and LC cleaves its target protein on synaptic vesicles, preventing their fusion with the cytoplasmic membrane and thus neurotransmitter release (By similarity). Binds to host peripheral neuronal presynaptic membranes via synaptotagmins 1 and 2 (SYT1 and SYT2) (PubMed:15123599). Toxin binds to the membrane proximal extra-cytoplasmic region of SYT1 and SYT2 that is transiently exposed outside of cells during exocytosis; exogenous gangliosides do not enhance binding and subsequent uptake of toxin into host cells (PubMed:15123599). Toxin activity can be blocked by the appropriate synaptotagmin protein fragments in cell culture (PubMed:15123599).</text>
</comment>
<comment type="function">
    <molecule>Botulinum neurotoxin G light chain</molecule>
    <text evidence="11">Has proteolytic activity. After translocation into the eukaryotic host cytosol acts as a zinc endopeptidase that cleaves synaptobrevins-1, -2 and -3 (also called VAMP1, VAMP2 and VAMP3) (PubMed:7910017). Hydrolyzes the '81-Ala-|-Ala-82' bond of VAMP2, and probably also the equivalent 'Ala-|-Ala' sites in VAMP1 and VAMP3 (PubMed:7910017). Has low activity on A.californica synaptobrevin and none on D.melanogaster synaptobrevin or cellubrevin, have a slightly different sequence (PubMed:7910017).</text>
</comment>
<comment type="function">
    <molecule>Botulinum neurotoxin G heavy chain</molecule>
    <text evidence="1 3 5 6 7 8">Responsible for host cell targeting and translocation of light chain (LC) into host cytosol. Composed of 3 subdomains; the translocation domain (TD), and N-terminus and C-terminus of the receptor-binding domain (N-RBD, C-RBD). The RBD is responsible for the adherence of the toxin to the cell surface. It simultaneously recognizes 2 coreceptors; polysialated gangliosides and the receptor proteins SYT1 and SYT2 in close proximity on host synaptic vesicles (PubMed:17185412). The N-terminus of the TD wraps an extended belt around the perimeter of the LC, protecting Zn(2+) in the active site; it may also prevent premature LC dissociation from the translocation channel and protect toxin prior to translocation (By similarity). The TD inserts into synaptic vesicle membrane to allow translocation into the host cytosol (By similarity). Has 2 coreceptors; complex gangliosides found primarily on neural tissue and host synaptotagmin-1 and -2 (SYT1 and SYT2) which bind to separate sites at the tip of the HC (PubMed:17185412). HC alone binds to host receptors SYT1 and SYT2; C-RBD interacts with host SYT2 (PubMed:15123599). Has equal affinity for SYT1 and SYT2; gangliosides are not required for (or only very slightly improve) binding to a membrane-anchored receptor fragment (PubMed:17185412, PubMed:20219474). Has also been shown to only bind SYT1; the assay methods were different (PubMed:20507178). Binds ganglioside GT1b (PubMed:20507178). Significantly decreases uptake and toxicity of whole BoNT/B and BoNT/G (PubMed:19650874).</text>
</comment>
<comment type="catalytic activity">
    <reaction evidence="11">
        <text>Limited hydrolysis of proteins of the neuroexocytosis apparatus, synaptobrevins, SNAP25 or syntaxin. No detected action on small molecule substrates.</text>
        <dbReference type="EC" id="3.4.24.69"/>
    </reaction>
</comment>
<comment type="cofactor">
    <cofactor evidence="4">
        <name>Zn(2+)</name>
        <dbReference type="ChEBI" id="CHEBI:29105"/>
    </cofactor>
    <text evidence="4">Binds 1 zinc ion per subunit (PubMed:16008342).</text>
</comment>
<comment type="subunit">
    <text evidence="3 5 7">Heterodimer; disulfide-linked heterodimer of a light chain (LC) and a heavy chain (HC). The LC has the proteolytic/pharmacological activity, while the N- and C-termini of the HC mediate channel formation and toxin binding, respectively. Interacts with host receptors synaptotagmin-1 and -2 (SYT1 and SYT2) (PubMed:15123599, PubMed:17185412, PubMed:20219474).</text>
</comment>
<comment type="subcellular location">
    <molecule>Botulinum neurotoxin type G</molecule>
    <subcellularLocation>
        <location evidence="10 16">Secreted</location>
    </subcellularLocation>
</comment>
<comment type="subcellular location">
    <molecule>Botulinum neurotoxin G light chain</molecule>
    <subcellularLocation>
        <location evidence="17">Secreted</location>
    </subcellularLocation>
    <subcellularLocation>
        <location evidence="18">Host cytoplasm</location>
        <location evidence="18">Host cytosol</location>
    </subcellularLocation>
</comment>
<comment type="subcellular location">
    <molecule>Botulinum neurotoxin G heavy chain</molecule>
    <subcellularLocation>
        <location evidence="17">Secreted</location>
    </subcellularLocation>
    <subcellularLocation>
        <location evidence="1">Host synapse</location>
        <location evidence="1">Host presynaptic cell membrane</location>
    </subcellularLocation>
    <subcellularLocation>
        <location evidence="1">Host cytoplasmic vesicle</location>
        <location evidence="1">Host secretory vesicle</location>
        <location evidence="1">Host synaptic vesicle membrane</location>
        <topology evidence="13">Multi-pass membrane protein</topology>
    </subcellularLocation>
</comment>
<comment type="domain">
    <molecule>Botulinum neurotoxin G light chain</molecule>
    <text evidence="11">Has protease activity (PubMed:7910017).</text>
</comment>
<comment type="domain">
    <molecule>Botulinum neurotoxin G heavy chain</molecule>
    <text evidence="1 7 8 11 14">Has 3 functional domains. The translocation domain (TD) which probably forms membrane channels to allow light chain (LC) into the host cytosol (Probable). The C-terminal receptor-binding domain (RBD) has 2 further subdomains, N-RBD (Hcn) and C-RBD (Hcc) (PubMed:20219474, PubMed:20507178). The N-terminus of the TD wraps an extended belt around the perimeter of the LC, protecting Zn(2+) in the active site and may be a pseudosubstrate inhibitor which serves as an intramolecular chaperone for the LC prior to its translocation into the host cytosol (By similarity). The RBD binds transiently exposed coreceptors on the host presynaptic cell membrane (Probable).</text>
</comment>
<comment type="miscellaneous">
    <text>There are seven antigenically distinct forms of botulinum neurotoxin: Types A, B, C, D, E, F, and G; new subtypes are quite frequent.</text>
</comment>
<comment type="miscellaneous">
    <text evidence="1">Botulism poisoning is usually food-borne, either by ingesting toxin or bacterial-contaminated food, or less frequently by inhalation poisoning. In both cases the neurotoxin binds to the apical surface of epithelial cells in the gut or airway. Toxin undergoes receptor-mediated endocytosis (using a different receptor than on target nerve cells), transcytosis across the epithelial cells and release into the general circulation. Once in the general circulation it binds to its target cells.</text>
</comment>
<comment type="miscellaneous">
    <text evidence="9 10 19">Type G toxin has been isolated from soil samples and human autopsy specimens but has not been clearly implicated as the cause of human paralytic illness or death (Ref.4). Strain 89 was isolated from soil in Mendoza province, Argentiana (PubMed:4922309). Administration of strain 89 toxin to mouse, chicken, guinea pig and rhesus monkeys causes botulism symptoms and in most cases death, while dog and sheep show no signs of botulism (PubMed:74236). In the original report 5-fold higher levels of toxin caused botulism and death in sheep (PubMed:4922309).</text>
</comment>
<comment type="miscellaneous">
    <text evidence="16 17">Trypsinization of purified toxin increases its toxicity, suggesting it is released as a single chain (PubMed:4922309, PubMed:74236).</text>
</comment>
<comment type="similarity">
    <text evidence="13">Belongs to the peptidase M27 family.</text>
</comment>
<comment type="online information" name="BotDB - A Database Resource for Clostridial Neurotoxins">
    <link uri="https://botdb.abcc.ncifcrf.gov/"/>
</comment>
<feature type="initiator methionine" description="Removed" evidence="1">
    <location>
        <position position="1"/>
    </location>
</feature>
<feature type="chain" id="PRO_0000444922" description="Botulinum neurotoxin type G">
    <location>
        <begin position="2"/>
        <end position="1297"/>
    </location>
</feature>
<feature type="chain" id="PRO_0000029227" description="Botulinum neurotoxin G light chain">
    <location>
        <begin position="2"/>
        <end position="442"/>
    </location>
</feature>
<feature type="chain" id="PRO_0000029228" description="Botulinum neurotoxin G heavy chain">
    <location>
        <begin position="443"/>
        <end position="1297"/>
    </location>
</feature>
<feature type="region of interest" description="Translocation domain (TD)" evidence="1">
    <location>
        <begin position="446"/>
        <end position="862"/>
    </location>
</feature>
<feature type="region of interest" description="Belt" evidence="1">
    <location>
        <begin position="488"/>
        <end position="537"/>
    </location>
</feature>
<feature type="region of interest" description="N-terminus of receptor binding domain (N-RBD)" evidence="7 8">
    <location>
        <begin position="868"/>
        <end position="1073"/>
    </location>
</feature>
<feature type="region of interest" description="C-terminus of receptor binding domain (C-RBD)" evidence="7 8">
    <location>
        <begin position="1089"/>
        <end position="1297"/>
    </location>
</feature>
<feature type="short sequence motif" description="Host ganglioside-binding motif" evidence="15">
    <location>
        <begin position="1266"/>
        <end position="1269"/>
    </location>
</feature>
<feature type="active site" evidence="2">
    <location>
        <position position="231"/>
    </location>
</feature>
<feature type="binding site" evidence="2 4 20">
    <location>
        <position position="230"/>
    </location>
    <ligand>
        <name>Zn(2+)</name>
        <dbReference type="ChEBI" id="CHEBI:29105"/>
        <note>catalytic</note>
    </ligand>
</feature>
<feature type="binding site" evidence="2 4 20">
    <location>
        <position position="234"/>
    </location>
    <ligand>
        <name>Zn(2+)</name>
        <dbReference type="ChEBI" id="CHEBI:29105"/>
        <note>catalytic</note>
    </ligand>
</feature>
<feature type="binding site" evidence="4 20">
    <location>
        <position position="268"/>
    </location>
    <ligand>
        <name>Zn(2+)</name>
        <dbReference type="ChEBI" id="CHEBI:29105"/>
        <note>catalytic</note>
    </ligand>
</feature>
<feature type="site" description="Ganglioside-binding site" evidence="15">
    <location>
        <position position="1268"/>
    </location>
</feature>
<feature type="disulfide bond" description="Interchain (between light and heavy chains)" evidence="1 13">
    <location>
        <begin position="436"/>
        <end position="450"/>
    </location>
</feature>
<feature type="mutagenesis site" description="Improves solubility of isolated heavy chain (HC), used for crystallization." evidence="8">
    <original>SSLYW</original>
    <variation>EERYK</variation>
    <location>
        <begin position="1080"/>
        <end position="1084"/>
    </location>
</feature>
<feature type="mutagenesis site" description="Significantly decreased binding of HC to host SYT1 and SYT2 independent of gangliosides." evidence="5">
    <original>M</original>
    <variation>D</variation>
    <location>
        <position position="1126"/>
    </location>
</feature>
<feature type="mutagenesis site" description="Significantly decreased binding of HC to host SYT1 and SYT2 independent of gangliosides." evidence="5">
    <original>L</original>
    <variation>R</variation>
    <location>
        <position position="1191"/>
    </location>
</feature>
<feature type="mutagenesis site" description="Significantly decreased binding of HC to host SYT1 and SYT2 independent of gangliosides." evidence="5">
    <original>Q</original>
    <variation>E</variation>
    <location>
        <position position="1200"/>
    </location>
</feature>
<feature type="mutagenesis site" description="Decreased binding of HC to host SYT1 and SYT2 independent of gangliosides; whole toxin is less toxic. Dramatically decreased toxicity; when associated with L-1268. HC no longer inhibits whole-toxin uptake and toxicity." evidence="5 6">
    <original>Q</original>
    <variation>K</variation>
    <location>
        <position position="1200"/>
    </location>
</feature>
<feature type="mutagenesis site" description="Slightly increased binding of HC to host SYT1 and SYT2 in presence of gangliosides." evidence="5">
    <original>Y</original>
    <variation>F</variation>
    <location>
        <position position="1262"/>
    </location>
</feature>
<feature type="mutagenesis site" description="Gangliosides no longer increase HC affinity for SYT1 or SYT2; whole toxin about significantly less toxic. Dramatically decreased toxicity; when associated with K-1200. In mice without complex gangliosides no change compared to wild-type protein. HC no longer inhibits whole-toxin uptake and toxicity." evidence="5 6">
    <original>W</original>
    <variation>L</variation>
    <location>
        <position position="1268"/>
    </location>
</feature>
<feature type="strand" evidence="23">
    <location>
        <begin position="16"/>
        <end position="23"/>
    </location>
</feature>
<feature type="strand" evidence="23">
    <location>
        <begin position="28"/>
        <end position="30"/>
    </location>
</feature>
<feature type="strand" evidence="23">
    <location>
        <begin position="34"/>
        <end position="40"/>
    </location>
</feature>
<feature type="strand" evidence="23">
    <location>
        <begin position="43"/>
        <end position="46"/>
    </location>
</feature>
<feature type="strand" evidence="23">
    <location>
        <begin position="69"/>
        <end position="74"/>
    </location>
</feature>
<feature type="turn" evidence="23">
    <location>
        <begin position="76"/>
        <end position="79"/>
    </location>
</feature>
<feature type="helix" evidence="23">
    <location>
        <begin position="82"/>
        <end position="99"/>
    </location>
</feature>
<feature type="helix" evidence="23">
    <location>
        <begin position="103"/>
        <end position="114"/>
    </location>
</feature>
<feature type="turn" evidence="23">
    <location>
        <begin position="134"/>
        <end position="136"/>
    </location>
</feature>
<feature type="strand" evidence="23">
    <location>
        <begin position="137"/>
        <end position="142"/>
    </location>
</feature>
<feature type="strand" evidence="23">
    <location>
        <begin position="150"/>
        <end position="155"/>
    </location>
</feature>
<feature type="strand" evidence="23">
    <location>
        <begin position="157"/>
        <end position="161"/>
    </location>
</feature>
<feature type="strand" evidence="23">
    <location>
        <begin position="171"/>
        <end position="173"/>
    </location>
</feature>
<feature type="helix" evidence="23">
    <location>
        <begin position="182"/>
        <end position="184"/>
    </location>
</feature>
<feature type="strand" evidence="23">
    <location>
        <begin position="185"/>
        <end position="187"/>
    </location>
</feature>
<feature type="strand" evidence="23">
    <location>
        <begin position="191"/>
        <end position="194"/>
    </location>
</feature>
<feature type="strand" evidence="23">
    <location>
        <begin position="199"/>
        <end position="208"/>
    </location>
</feature>
<feature type="strand" evidence="23">
    <location>
        <begin position="215"/>
        <end position="221"/>
    </location>
</feature>
<feature type="helix" evidence="23">
    <location>
        <begin position="224"/>
        <end position="239"/>
    </location>
</feature>
<feature type="helix" evidence="23">
    <location>
        <begin position="266"/>
        <end position="273"/>
    </location>
</feature>
<feature type="turn" evidence="23">
    <location>
        <begin position="277"/>
        <end position="279"/>
    </location>
</feature>
<feature type="helix" evidence="23">
    <location>
        <begin position="282"/>
        <end position="303"/>
    </location>
</feature>
<feature type="strand" evidence="23">
    <location>
        <begin position="308"/>
        <end position="313"/>
    </location>
</feature>
<feature type="helix" evidence="23">
    <location>
        <begin position="316"/>
        <end position="327"/>
    </location>
</feature>
<feature type="helix" evidence="23">
    <location>
        <begin position="341"/>
        <end position="353"/>
    </location>
</feature>
<feature type="helix" evidence="23">
    <location>
        <begin position="357"/>
        <end position="364"/>
    </location>
</feature>
<feature type="strand" evidence="23">
    <location>
        <begin position="377"/>
        <end position="381"/>
    </location>
</feature>
<feature type="turn" evidence="23">
    <location>
        <begin position="388"/>
        <end position="390"/>
    </location>
</feature>
<feature type="turn" evidence="23">
    <location>
        <begin position="393"/>
        <end position="395"/>
    </location>
</feature>
<feature type="helix" evidence="23">
    <location>
        <begin position="400"/>
        <end position="402"/>
    </location>
</feature>
<feature type="helix" evidence="23">
    <location>
        <begin position="406"/>
        <end position="411"/>
    </location>
</feature>
<feature type="turn" evidence="23">
    <location>
        <begin position="413"/>
        <end position="415"/>
    </location>
</feature>
<feature type="helix" evidence="23">
    <location>
        <begin position="417"/>
        <end position="419"/>
    </location>
</feature>
<feature type="turn" evidence="23">
    <location>
        <begin position="425"/>
        <end position="427"/>
    </location>
</feature>
<feature type="strand" evidence="23">
    <location>
        <begin position="428"/>
        <end position="432"/>
    </location>
</feature>
<feature type="strand" evidence="24">
    <location>
        <begin position="870"/>
        <end position="876"/>
    </location>
</feature>
<feature type="strand" evidence="24">
    <location>
        <begin position="879"/>
        <end position="882"/>
    </location>
</feature>
<feature type="strand" evidence="24">
    <location>
        <begin position="889"/>
        <end position="892"/>
    </location>
</feature>
<feature type="strand" evidence="24">
    <location>
        <begin position="897"/>
        <end position="899"/>
    </location>
</feature>
<feature type="strand" evidence="24">
    <location>
        <begin position="905"/>
        <end position="911"/>
    </location>
</feature>
<feature type="strand" evidence="24">
    <location>
        <begin position="916"/>
        <end position="919"/>
    </location>
</feature>
<feature type="turn" evidence="24">
    <location>
        <begin position="922"/>
        <end position="924"/>
    </location>
</feature>
<feature type="strand" evidence="24">
    <location>
        <begin position="927"/>
        <end position="930"/>
    </location>
</feature>
<feature type="strand" evidence="24">
    <location>
        <begin position="933"/>
        <end position="940"/>
    </location>
</feature>
<feature type="helix" evidence="24">
    <location>
        <begin position="946"/>
        <end position="948"/>
    </location>
</feature>
<feature type="helix" evidence="24">
    <location>
        <begin position="949"/>
        <end position="954"/>
    </location>
</feature>
<feature type="strand" evidence="24">
    <location>
        <begin position="956"/>
        <end position="964"/>
    </location>
</feature>
<feature type="strand" evidence="24">
    <location>
        <begin position="967"/>
        <end position="974"/>
    </location>
</feature>
<feature type="strand" evidence="24">
    <location>
        <begin position="977"/>
        <end position="983"/>
    </location>
</feature>
<feature type="strand" evidence="24">
    <location>
        <begin position="989"/>
        <end position="995"/>
    </location>
</feature>
<feature type="strand" evidence="25">
    <location>
        <begin position="998"/>
        <end position="1002"/>
    </location>
</feature>
<feature type="strand" evidence="24">
    <location>
        <begin position="1010"/>
        <end position="1016"/>
    </location>
</feature>
<feature type="strand" evidence="24">
    <location>
        <begin position="1020"/>
        <end position="1026"/>
    </location>
</feature>
<feature type="strand" evidence="24">
    <location>
        <begin position="1029"/>
        <end position="1035"/>
    </location>
</feature>
<feature type="strand" evidence="24">
    <location>
        <begin position="1046"/>
        <end position="1054"/>
    </location>
</feature>
<feature type="strand" evidence="24">
    <location>
        <begin position="1061"/>
        <end position="1072"/>
    </location>
</feature>
<feature type="helix" evidence="24">
    <location>
        <begin position="1076"/>
        <end position="1086"/>
    </location>
</feature>
<feature type="strand" evidence="24">
    <location>
        <begin position="1097"/>
        <end position="1099"/>
    </location>
</feature>
<feature type="strand" evidence="24">
    <location>
        <begin position="1105"/>
        <end position="1113"/>
    </location>
</feature>
<feature type="strand" evidence="24">
    <location>
        <begin position="1116"/>
        <end position="1121"/>
    </location>
</feature>
<feature type="helix" evidence="24">
    <location>
        <begin position="1122"/>
        <end position="1124"/>
    </location>
</feature>
<feature type="strand" evidence="24">
    <location>
        <begin position="1126"/>
        <end position="1131"/>
    </location>
</feature>
<feature type="strand" evidence="24">
    <location>
        <begin position="1134"/>
        <end position="1136"/>
    </location>
</feature>
<feature type="strand" evidence="24">
    <location>
        <begin position="1141"/>
        <end position="1143"/>
    </location>
</feature>
<feature type="strand" evidence="24">
    <location>
        <begin position="1150"/>
        <end position="1155"/>
    </location>
</feature>
<feature type="strand" evidence="24">
    <location>
        <begin position="1174"/>
        <end position="1184"/>
    </location>
</feature>
<feature type="strand" evidence="24">
    <location>
        <begin position="1186"/>
        <end position="1191"/>
    </location>
</feature>
<feature type="strand" evidence="24">
    <location>
        <begin position="1196"/>
        <end position="1200"/>
    </location>
</feature>
<feature type="strand" evidence="24">
    <location>
        <begin position="1202"/>
        <end position="1206"/>
    </location>
</feature>
<feature type="strand" evidence="24">
    <location>
        <begin position="1216"/>
        <end position="1219"/>
    </location>
</feature>
<feature type="strand" evidence="24">
    <location>
        <begin position="1229"/>
        <end position="1236"/>
    </location>
</feature>
<feature type="strand" evidence="24">
    <location>
        <begin position="1239"/>
        <end position="1248"/>
    </location>
</feature>
<feature type="strand" evidence="24">
    <location>
        <begin position="1260"/>
        <end position="1267"/>
    </location>
</feature>
<feature type="helix" evidence="24">
    <location>
        <begin position="1268"/>
        <end position="1272"/>
    </location>
</feature>
<feature type="strand" evidence="24">
    <location>
        <begin position="1275"/>
        <end position="1277"/>
    </location>
</feature>
<feature type="strand" evidence="24">
    <location>
        <begin position="1286"/>
        <end position="1289"/>
    </location>
</feature>
<proteinExistence type="evidence at protein level"/>
<name>BXG_CLOBO</name>
<reference key="1">
    <citation type="journal article" date="1993" name="Biochim. Biophys. Acta">
        <title>Nucleotide sequence of the gene coding for Clostridium botulinum (Clostridium argentinense) type G neurotoxin: genealogical comparison with other clostridial neurotoxins.</title>
        <authorList>
            <person name="Campbell K."/>
            <person name="Collins M.D."/>
            <person name="East A.K."/>
        </authorList>
    </citation>
    <scope>NUCLEOTIDE SEQUENCE [GENOMIC DNA]</scope>
    <source>
        <strain>113 / 30 / NCFB 3012 / Type G</strain>
    </source>
</reference>
<reference key="2">
    <citation type="journal article" date="1970" name="Zentralbl. Bakteriol.">
        <title>Another type of Clostridium botulinum.</title>
        <authorList>
            <person name="Gimenez D.F."/>
            <person name="Ciccarelli A.S."/>
        </authorList>
    </citation>
    <scope>IDENTIFICATION OF TOXIN</scope>
    <scope>SUBCELLULAR LOCATION (BOTULINUM NEUROTOXIN TYPE G)</scope>
    <scope>HOST RANGE</scope>
    <scope>EPIDEMIOLOGY</scope>
    <scope>POSSIBLE RELEASE AS SINGLE CHAIN</scope>
    <source>
        <strain>89 / BL 1353 /Type G</strain>
    </source>
</reference>
<reference key="3">
    <citation type="journal article" date="1977" name="Appl. Environ. Microbiol.">
        <title>Cultural and physiological characteristics of Clostridium botulinum type G and the susceptibility of certain animals to its toxin.</title>
        <authorList>
            <person name="Ciccarelli A.S."/>
            <person name="Whaley D.N."/>
            <person name="McCroskey L.M."/>
            <person name="Gimenez D.F."/>
            <person name="Dowell V.R. Jr."/>
            <person name="Hatheway C.L."/>
        </authorList>
    </citation>
    <scope>SUBCELLULAR LOCATION (BOTULINUM NEUROTOXIN TYPE G)</scope>
    <scope>HOST RANGE</scope>
    <scope>EPIDEMIOLOGY</scope>
    <scope>POSSIBLE RELEASE AS SINGLE CHAIN</scope>
    <source>
        <strain>89 / BL 1353 /Type G</strain>
    </source>
</reference>
<reference key="4">
    <citation type="journal article" date="1988" name="Int. J. Syst. Bacteriol.">
        <title>Clostridium argentinense sp. nov.: a genetically homogeneous group composed of all Strains of Clostridium botulinum toxin type G and some nontoxigenic strains previously identified as Clostridium subterminale or Clostridium hastiforme.</title>
        <authorList>
            <person name="Sue J.C."/>
            <person name="Hatheway C.L."/>
            <person name="Steigerwalt A.G."/>
            <person name="Brenner D.J."/>
        </authorList>
    </citation>
    <scope>HOST RANGE</scope>
    <scope>EPIDEMIOLOGY</scope>
</reference>
<reference key="5">
    <citation type="journal article" date="1994" name="Biochem. Biophys. Res. Commun.">
        <title>Botulinum neurotoxin type G proteolyses the Ala81-Ala82 bond of rat synaptobrevin 2.</title>
        <authorList>
            <person name="Yamasaki S."/>
            <person name="Binz T."/>
            <person name="Hayashi T."/>
            <person name="Szabo E."/>
            <person name="Yamasaki N."/>
            <person name="Eklund M."/>
            <person name="Jahn R."/>
            <person name="Niemann H."/>
        </authorList>
    </citation>
    <scope>FUNCTION (BOTULINUM NEUROTOXIN G LIGHT CHAIN)</scope>
    <scope>IDENTIFICATION OF SUBSTRATE</scope>
    <scope>CATALYTIC ACTIVITY</scope>
    <scope>SUBCELLULAR LOCATION (BOTULINUM NEUROTOXIN G LIGHT CHAIN)</scope>
</reference>
<reference key="6">
    <citation type="journal article" date="2004" name="J. Biol. Chem.">
        <title>Synaptotagmins I and II act as nerve cell receptors for botulinum neurotoxin G.</title>
        <authorList>
            <person name="Rummel A."/>
            <person name="Karnath T."/>
            <person name="Henke T."/>
            <person name="Bigalke H."/>
            <person name="Binz T."/>
        </authorList>
    </citation>
    <scope>FUNCTION (BOTULINUM NEUROTOXIN TYPE G AND BOTULINUM NEUROTOXIN G HEAVY CHAIN)</scope>
    <scope>IDENTIFICATION OF HOST RECEPTOR (BOTULINUM NEUROTOXIN TYPE G)</scope>
    <scope>INTERACTION WITH HOST SYT1 AND SYT2</scope>
    <source>
        <strain>Type G</strain>
    </source>
</reference>
<reference key="7">
    <citation type="journal article" date="2007" name="Proc. Natl. Acad. Sci. U.S.A.">
        <title>Identification of the protein receptor binding site of botulinum neurotoxins B and G proves the double-receptor concept.</title>
        <authorList>
            <person name="Rummel A."/>
            <person name="Eichner T."/>
            <person name="Weil T."/>
            <person name="Karnath T."/>
            <person name="Gutcaits A."/>
            <person name="Mahrhold S."/>
            <person name="Sandhoff K."/>
            <person name="Proia R.L."/>
            <person name="Acharya K.R."/>
            <person name="Bigalke H."/>
            <person name="Binz T."/>
        </authorList>
    </citation>
    <scope>FUNCTION (BOTULINUM NEUROTOXIN B HEAVY CHAIN)</scope>
    <scope>INTERACTION WITH HOST SYT1 AND SYT2</scope>
    <scope>MUTAGENESIS OF MET-1126; LEU-1191; GLN-1200; TYR-1262 AND TRP-1268</scope>
    <source>
        <strain>Type G</strain>
    </source>
</reference>
<reference key="8">
    <citation type="journal article" date="2009" name="J. Neurochem.">
        <title>Botulinum neurotoxins C, E and F bind gangliosides via a conserved binding site prior to stimulation-dependent uptake with botulinum neurotoxin F utilising the three isoforms of SV2 as second receptor.</title>
        <authorList>
            <person name="Rummel A."/>
            <person name="Haefner K."/>
            <person name="Mahrhold S."/>
            <person name="Darashchonak N."/>
            <person name="Holt M."/>
            <person name="Jahn R."/>
            <person name="Beermann S."/>
            <person name="Karnath T."/>
            <person name="Bigalke H."/>
            <person name="Binz T."/>
        </authorList>
    </citation>
    <scope>FUNCTION (BOTULINUM NEUROTOXIN TYPE G)</scope>
    <scope>FUNCTION (BOTULINUM NEUROTOXIN G HEAVY CHAIN)</scope>
    <scope>MUTAGENESIS OF GLN-1200 AND TRP-1268</scope>
</reference>
<reference evidence="20" key="9">
    <citation type="journal article" date="2005" name="Biochemistry">
        <title>Crystal structure of botulinum neurotoxin type G light chain: serotype divergence in substrate recognition.</title>
        <authorList>
            <person name="Arndt J.W."/>
            <person name="Yu W."/>
            <person name="Bi F."/>
            <person name="Stevens R.C."/>
        </authorList>
    </citation>
    <scope>X-RAY CRYSTALLOGRAPHY (2.35 ANGSTROMS) OF 1-443 IN COMPLEX WITH ZINC</scope>
    <scope>COFACTOR</scope>
</reference>
<reference evidence="22" key="10">
    <citation type="journal article" date="2010" name="Biochemistry">
        <title>Structural analysis of botulinum neurotoxin type G receptor binding.</title>
        <authorList>
            <person name="Schmitt J."/>
            <person name="Karalewitz A."/>
            <person name="Benefield D.A."/>
            <person name="Mushrush D.J."/>
            <person name="Pruitt R.N."/>
            <person name="Spiller B.W."/>
            <person name="Barbieri J.T."/>
            <person name="Lacy D.B."/>
        </authorList>
    </citation>
    <scope>X-RAY CRYSTALLOGRAPHY (1.98 ANGSTROMS) OF 867-1297</scope>
    <scope>FUNCTION (BOTULINUM NEUROTOXIN B HEAVY CHAIN)</scope>
    <scope>DOMAIN</scope>
    <scope>GANGLIOSIDE-BINDING</scope>
    <scope>MUTAGENESIS OF 1080-SER--TRP-1084</scope>
    <source>
        <strain>Type G</strain>
    </source>
</reference>
<reference evidence="21" key="11">
    <citation type="journal article" date="2010" name="J. Mol. Biol.">
        <title>Crystal structure of the botulinum neurotoxin type G binding domain: insight into cell surface binding.</title>
        <authorList>
            <person name="Stenmark P."/>
            <person name="Dong M."/>
            <person name="Dupuy J."/>
            <person name="Chapman E.R."/>
            <person name="Stevens R.C."/>
        </authorList>
    </citation>
    <scope>X-RAY CRYSTALLOGRAPHY (1.90 ANGSTROMS) OF 863-1297</scope>
    <scope>FUNCTION (BOTULINUM NEUROTOXIN B HEAVY CHAIN)</scope>
    <scope>SUBUNIT</scope>
    <scope>DOMAIN</scope>
    <source>
        <strain>Type G</strain>
    </source>
</reference>